<protein>
    <recommendedName>
        <fullName>Probable serine/threonine-protein kinase DDB_G0284251</fullName>
        <ecNumber>2.7.11.1</ecNumber>
    </recommendedName>
</protein>
<dbReference type="EC" id="2.7.11.1"/>
<dbReference type="EMBL" id="AAFI02000064">
    <property type="protein sequence ID" value="EAL65314.1"/>
    <property type="molecule type" value="Genomic_DNA"/>
</dbReference>
<dbReference type="RefSeq" id="XP_638675.1">
    <property type="nucleotide sequence ID" value="XM_633583.1"/>
</dbReference>
<dbReference type="SMR" id="Q54PX0"/>
<dbReference type="STRING" id="44689.Q54PX0"/>
<dbReference type="PaxDb" id="44689-DDB0229915"/>
<dbReference type="EnsemblProtists" id="EAL65314">
    <property type="protein sequence ID" value="EAL65314"/>
    <property type="gene ID" value="DDB_G0284251"/>
</dbReference>
<dbReference type="GeneID" id="8624504"/>
<dbReference type="KEGG" id="ddi:DDB_G0284251"/>
<dbReference type="dictyBase" id="DDB_G0284251"/>
<dbReference type="VEuPathDB" id="AmoebaDB:DDB_G0284251"/>
<dbReference type="eggNOG" id="KOG0198">
    <property type="taxonomic scope" value="Eukaryota"/>
</dbReference>
<dbReference type="HOGENOM" id="CLU_550343_0_0_1"/>
<dbReference type="InParanoid" id="Q54PX0"/>
<dbReference type="OMA" id="LACTMIE"/>
<dbReference type="PhylomeDB" id="Q54PX0"/>
<dbReference type="Reactome" id="R-DDI-2871796">
    <property type="pathway name" value="FCERI mediated MAPK activation"/>
</dbReference>
<dbReference type="PRO" id="PR:Q54PX0"/>
<dbReference type="Proteomes" id="UP000002195">
    <property type="component" value="Chromosome 4"/>
</dbReference>
<dbReference type="GO" id="GO:0005737">
    <property type="term" value="C:cytoplasm"/>
    <property type="evidence" value="ECO:0000318"/>
    <property type="project" value="GO_Central"/>
</dbReference>
<dbReference type="GO" id="GO:0005524">
    <property type="term" value="F:ATP binding"/>
    <property type="evidence" value="ECO:0007669"/>
    <property type="project" value="UniProtKB-KW"/>
</dbReference>
<dbReference type="GO" id="GO:0046872">
    <property type="term" value="F:metal ion binding"/>
    <property type="evidence" value="ECO:0007669"/>
    <property type="project" value="UniProtKB-KW"/>
</dbReference>
<dbReference type="GO" id="GO:0106310">
    <property type="term" value="F:protein serine kinase activity"/>
    <property type="evidence" value="ECO:0007669"/>
    <property type="project" value="RHEA"/>
</dbReference>
<dbReference type="GO" id="GO:0004674">
    <property type="term" value="F:protein serine/threonine kinase activity"/>
    <property type="evidence" value="ECO:0000318"/>
    <property type="project" value="GO_Central"/>
</dbReference>
<dbReference type="CDD" id="cd06627">
    <property type="entry name" value="STKc_Cdc7_like"/>
    <property type="match status" value="1"/>
</dbReference>
<dbReference type="FunFam" id="3.30.200.20:FF:000042">
    <property type="entry name" value="Aurora kinase A"/>
    <property type="match status" value="1"/>
</dbReference>
<dbReference type="FunFam" id="1.10.510.10:FF:000946">
    <property type="entry name" value="Probable serine/threonine-protein kinase DDB_G0284251"/>
    <property type="match status" value="1"/>
</dbReference>
<dbReference type="Gene3D" id="1.10.510.10">
    <property type="entry name" value="Transferase(Phosphotransferase) domain 1"/>
    <property type="match status" value="1"/>
</dbReference>
<dbReference type="InterPro" id="IPR011009">
    <property type="entry name" value="Kinase-like_dom_sf"/>
</dbReference>
<dbReference type="InterPro" id="IPR000719">
    <property type="entry name" value="Prot_kinase_dom"/>
</dbReference>
<dbReference type="InterPro" id="IPR017441">
    <property type="entry name" value="Protein_kinase_ATP_BS"/>
</dbReference>
<dbReference type="InterPro" id="IPR001245">
    <property type="entry name" value="Ser-Thr/Tyr_kinase_cat_dom"/>
</dbReference>
<dbReference type="InterPro" id="IPR008271">
    <property type="entry name" value="Ser/Thr_kinase_AS"/>
</dbReference>
<dbReference type="InterPro" id="IPR050629">
    <property type="entry name" value="STE20/SPS1-PAK"/>
</dbReference>
<dbReference type="PANTHER" id="PTHR48012:SF26">
    <property type="entry name" value="SERINE_THREONINE-PROTEIN KINASE DDB_G0283821-RELATED"/>
    <property type="match status" value="1"/>
</dbReference>
<dbReference type="PANTHER" id="PTHR48012">
    <property type="entry name" value="STERILE20-LIKE KINASE, ISOFORM B-RELATED"/>
    <property type="match status" value="1"/>
</dbReference>
<dbReference type="Pfam" id="PF00069">
    <property type="entry name" value="Pkinase"/>
    <property type="match status" value="1"/>
</dbReference>
<dbReference type="PRINTS" id="PR00109">
    <property type="entry name" value="TYRKINASE"/>
</dbReference>
<dbReference type="SMART" id="SM00220">
    <property type="entry name" value="S_TKc"/>
    <property type="match status" value="1"/>
</dbReference>
<dbReference type="SUPFAM" id="SSF56112">
    <property type="entry name" value="Protein kinase-like (PK-like)"/>
    <property type="match status" value="1"/>
</dbReference>
<dbReference type="PROSITE" id="PS00107">
    <property type="entry name" value="PROTEIN_KINASE_ATP"/>
    <property type="match status" value="1"/>
</dbReference>
<dbReference type="PROSITE" id="PS50011">
    <property type="entry name" value="PROTEIN_KINASE_DOM"/>
    <property type="match status" value="1"/>
</dbReference>
<dbReference type="PROSITE" id="PS00108">
    <property type="entry name" value="PROTEIN_KINASE_ST"/>
    <property type="match status" value="1"/>
</dbReference>
<evidence type="ECO:0000250" key="1">
    <source>
        <dbReference type="UniProtKB" id="P28523"/>
    </source>
</evidence>
<evidence type="ECO:0000250" key="2">
    <source>
        <dbReference type="UniProtKB" id="P41892"/>
    </source>
</evidence>
<evidence type="ECO:0000255" key="3"/>
<evidence type="ECO:0000255" key="4">
    <source>
        <dbReference type="PROSITE-ProRule" id="PRU00159"/>
    </source>
</evidence>
<evidence type="ECO:0000255" key="5">
    <source>
        <dbReference type="PROSITE-ProRule" id="PRU10027"/>
    </source>
</evidence>
<evidence type="ECO:0000256" key="6">
    <source>
        <dbReference type="SAM" id="MobiDB-lite"/>
    </source>
</evidence>
<evidence type="ECO:0000312" key="7">
    <source>
        <dbReference type="EMBL" id="EAL65314.1"/>
    </source>
</evidence>
<reference evidence="7" key="1">
    <citation type="journal article" date="2005" name="Nature">
        <title>The genome of the social amoeba Dictyostelium discoideum.</title>
        <authorList>
            <person name="Eichinger L."/>
            <person name="Pachebat J.A."/>
            <person name="Gloeckner G."/>
            <person name="Rajandream M.A."/>
            <person name="Sucgang R."/>
            <person name="Berriman M."/>
            <person name="Song J."/>
            <person name="Olsen R."/>
            <person name="Szafranski K."/>
            <person name="Xu Q."/>
            <person name="Tunggal B."/>
            <person name="Kummerfeld S."/>
            <person name="Madera M."/>
            <person name="Konfortov B.A."/>
            <person name="Rivero F."/>
            <person name="Bankier A.T."/>
            <person name="Lehmann R."/>
            <person name="Hamlin N."/>
            <person name="Davies R."/>
            <person name="Gaudet P."/>
            <person name="Fey P."/>
            <person name="Pilcher K."/>
            <person name="Chen G."/>
            <person name="Saunders D."/>
            <person name="Sodergren E.J."/>
            <person name="Davis P."/>
            <person name="Kerhornou A."/>
            <person name="Nie X."/>
            <person name="Hall N."/>
            <person name="Anjard C."/>
            <person name="Hemphill L."/>
            <person name="Bason N."/>
            <person name="Farbrother P."/>
            <person name="Desany B."/>
            <person name="Just E."/>
            <person name="Morio T."/>
            <person name="Rost R."/>
            <person name="Churcher C.M."/>
            <person name="Cooper J."/>
            <person name="Haydock S."/>
            <person name="van Driessche N."/>
            <person name="Cronin A."/>
            <person name="Goodhead I."/>
            <person name="Muzny D.M."/>
            <person name="Mourier T."/>
            <person name="Pain A."/>
            <person name="Lu M."/>
            <person name="Harper D."/>
            <person name="Lindsay R."/>
            <person name="Hauser H."/>
            <person name="James K.D."/>
            <person name="Quiles M."/>
            <person name="Madan Babu M."/>
            <person name="Saito T."/>
            <person name="Buchrieser C."/>
            <person name="Wardroper A."/>
            <person name="Felder M."/>
            <person name="Thangavelu M."/>
            <person name="Johnson D."/>
            <person name="Knights A."/>
            <person name="Loulseged H."/>
            <person name="Mungall K.L."/>
            <person name="Oliver K."/>
            <person name="Price C."/>
            <person name="Quail M.A."/>
            <person name="Urushihara H."/>
            <person name="Hernandez J."/>
            <person name="Rabbinowitsch E."/>
            <person name="Steffen D."/>
            <person name="Sanders M."/>
            <person name="Ma J."/>
            <person name="Kohara Y."/>
            <person name="Sharp S."/>
            <person name="Simmonds M.N."/>
            <person name="Spiegler S."/>
            <person name="Tivey A."/>
            <person name="Sugano S."/>
            <person name="White B."/>
            <person name="Walker D."/>
            <person name="Woodward J.R."/>
            <person name="Winckler T."/>
            <person name="Tanaka Y."/>
            <person name="Shaulsky G."/>
            <person name="Schleicher M."/>
            <person name="Weinstock G.M."/>
            <person name="Rosenthal A."/>
            <person name="Cox E.C."/>
            <person name="Chisholm R.L."/>
            <person name="Gibbs R.A."/>
            <person name="Loomis W.F."/>
            <person name="Platzer M."/>
            <person name="Kay R.R."/>
            <person name="Williams J.G."/>
            <person name="Dear P.H."/>
            <person name="Noegel A.A."/>
            <person name="Barrell B.G."/>
            <person name="Kuspa A."/>
        </authorList>
    </citation>
    <scope>NUCLEOTIDE SEQUENCE [LARGE SCALE GENOMIC DNA]</scope>
    <source>
        <strain evidence="7">AX4</strain>
    </source>
</reference>
<feature type="chain" id="PRO_0000370245" description="Probable serine/threonine-protein kinase DDB_G0284251">
    <location>
        <begin position="1"/>
        <end position="496"/>
    </location>
</feature>
<feature type="domain" description="Protein kinase" evidence="4">
    <location>
        <begin position="36"/>
        <end position="288"/>
    </location>
</feature>
<feature type="region of interest" description="Disordered" evidence="6">
    <location>
        <begin position="1"/>
        <end position="25"/>
    </location>
</feature>
<feature type="region of interest" description="Disordered" evidence="6">
    <location>
        <begin position="323"/>
        <end position="345"/>
    </location>
</feature>
<feature type="region of interest" description="Disordered" evidence="6">
    <location>
        <begin position="454"/>
        <end position="496"/>
    </location>
</feature>
<feature type="coiled-coil region" evidence="3">
    <location>
        <begin position="353"/>
        <end position="386"/>
    </location>
</feature>
<feature type="compositionally biased region" description="Low complexity" evidence="6">
    <location>
        <begin position="1"/>
        <end position="13"/>
    </location>
</feature>
<feature type="compositionally biased region" description="Low complexity" evidence="6">
    <location>
        <begin position="458"/>
        <end position="486"/>
    </location>
</feature>
<feature type="compositionally biased region" description="Basic residues" evidence="6">
    <location>
        <begin position="487"/>
        <end position="496"/>
    </location>
</feature>
<feature type="active site" description="Proton acceptor" evidence="1 4 5">
    <location>
        <position position="158"/>
    </location>
</feature>
<feature type="binding site" evidence="1 4">
    <location>
        <begin position="42"/>
        <end position="50"/>
    </location>
    <ligand>
        <name>ATP</name>
        <dbReference type="ChEBI" id="CHEBI:30616"/>
    </ligand>
</feature>
<feature type="binding site" evidence="1 4">
    <location>
        <position position="65"/>
    </location>
    <ligand>
        <name>ATP</name>
        <dbReference type="ChEBI" id="CHEBI:30616"/>
    </ligand>
</feature>
<sequence>MIEINNNHNNGNGKQFPSSQIMPDSKKKSIVKIGEYTLGEKIGRGAFGQVFKGLNGKTGEFVAIKQIDSNKIDESSLQSVKGEVEILHKLRHNNIVKVLGVVEVQAQLNFILEYVENGSLRDVIEKFGPLSEELCIIYLYQMLQGLAYLHSNKVIHRDIKASNILITKEGVIKLADFGVASQIDSESQLRFSVVGTPYWMAPESIEISGCSSASDIWSLGSTMIELLTGNPPYYTLQPMAAMFRIVSDQHPPFPTDISKEFLDYFQQSFKKDPTQRPTAQELLQHPIFFTLQKVPPTLSELQSTLKTLNGGRSRLRTSVNSIDWGSSSSTSGSSTPLSSSSSSSNIKSIVSDEDFNKLQTTIKQQAQTISNLSEEILILKKELKEKPKLEEQQFYKEYFMALAISVKVNQCYQDKTCEPKDMQQLYEMARSQEIPWYKLIEWIPSQLISNDNIPQLTPSSSRENISLSNSSSSIPNPNQNQNQNNKSKSKKFGFFS</sequence>
<accession>Q54PX0</accession>
<name>Y4251_DICDI</name>
<proteinExistence type="inferred from homology"/>
<keyword id="KW-0067">ATP-binding</keyword>
<keyword id="KW-0175">Coiled coil</keyword>
<keyword id="KW-0418">Kinase</keyword>
<keyword id="KW-0460">Magnesium</keyword>
<keyword id="KW-0479">Metal-binding</keyword>
<keyword id="KW-0547">Nucleotide-binding</keyword>
<keyword id="KW-1185">Reference proteome</keyword>
<keyword id="KW-0723">Serine/threonine-protein kinase</keyword>
<keyword id="KW-0808">Transferase</keyword>
<comment type="catalytic activity">
    <reaction evidence="2">
        <text>L-seryl-[protein] + ATP = O-phospho-L-seryl-[protein] + ADP + H(+)</text>
        <dbReference type="Rhea" id="RHEA:17989"/>
        <dbReference type="Rhea" id="RHEA-COMP:9863"/>
        <dbReference type="Rhea" id="RHEA-COMP:11604"/>
        <dbReference type="ChEBI" id="CHEBI:15378"/>
        <dbReference type="ChEBI" id="CHEBI:29999"/>
        <dbReference type="ChEBI" id="CHEBI:30616"/>
        <dbReference type="ChEBI" id="CHEBI:83421"/>
        <dbReference type="ChEBI" id="CHEBI:456216"/>
        <dbReference type="EC" id="2.7.11.1"/>
    </reaction>
</comment>
<comment type="catalytic activity">
    <reaction evidence="2">
        <text>L-threonyl-[protein] + ATP = O-phospho-L-threonyl-[protein] + ADP + H(+)</text>
        <dbReference type="Rhea" id="RHEA:46608"/>
        <dbReference type="Rhea" id="RHEA-COMP:11060"/>
        <dbReference type="Rhea" id="RHEA-COMP:11605"/>
        <dbReference type="ChEBI" id="CHEBI:15378"/>
        <dbReference type="ChEBI" id="CHEBI:30013"/>
        <dbReference type="ChEBI" id="CHEBI:30616"/>
        <dbReference type="ChEBI" id="CHEBI:61977"/>
        <dbReference type="ChEBI" id="CHEBI:456216"/>
        <dbReference type="EC" id="2.7.11.1"/>
    </reaction>
</comment>
<comment type="cofactor">
    <cofactor evidence="2">
        <name>Mg(2+)</name>
        <dbReference type="ChEBI" id="CHEBI:18420"/>
    </cofactor>
</comment>
<comment type="similarity">
    <text evidence="2">Belongs to the protein kinase superfamily. STE Ser/Thr protein kinase family.</text>
</comment>
<organism>
    <name type="scientific">Dictyostelium discoideum</name>
    <name type="common">Social amoeba</name>
    <dbReference type="NCBI Taxonomy" id="44689"/>
    <lineage>
        <taxon>Eukaryota</taxon>
        <taxon>Amoebozoa</taxon>
        <taxon>Evosea</taxon>
        <taxon>Eumycetozoa</taxon>
        <taxon>Dictyostelia</taxon>
        <taxon>Dictyosteliales</taxon>
        <taxon>Dictyosteliaceae</taxon>
        <taxon>Dictyostelium</taxon>
    </lineage>
</organism>
<gene>
    <name type="ORF">DDB_G0284251</name>
</gene>